<dbReference type="EMBL" id="AE016823">
    <property type="protein sequence ID" value="AAS70196.1"/>
    <property type="molecule type" value="Genomic_DNA"/>
</dbReference>
<dbReference type="RefSeq" id="WP_001273642.1">
    <property type="nucleotide sequence ID" value="NC_005823.1"/>
</dbReference>
<dbReference type="SMR" id="Q72RY7"/>
<dbReference type="GeneID" id="61144898"/>
<dbReference type="KEGG" id="lic:LIC_11601"/>
<dbReference type="HOGENOM" id="CLU_033123_0_0_12"/>
<dbReference type="Proteomes" id="UP000007037">
    <property type="component" value="Chromosome I"/>
</dbReference>
<dbReference type="GO" id="GO:0009376">
    <property type="term" value="C:HslUV protease complex"/>
    <property type="evidence" value="ECO:0007669"/>
    <property type="project" value="UniProtKB-UniRule"/>
</dbReference>
<dbReference type="GO" id="GO:0005524">
    <property type="term" value="F:ATP binding"/>
    <property type="evidence" value="ECO:0007669"/>
    <property type="project" value="UniProtKB-UniRule"/>
</dbReference>
<dbReference type="GO" id="GO:0016887">
    <property type="term" value="F:ATP hydrolysis activity"/>
    <property type="evidence" value="ECO:0007669"/>
    <property type="project" value="InterPro"/>
</dbReference>
<dbReference type="GO" id="GO:0008233">
    <property type="term" value="F:peptidase activity"/>
    <property type="evidence" value="ECO:0007669"/>
    <property type="project" value="InterPro"/>
</dbReference>
<dbReference type="GO" id="GO:0036402">
    <property type="term" value="F:proteasome-activating activity"/>
    <property type="evidence" value="ECO:0007669"/>
    <property type="project" value="UniProtKB-UniRule"/>
</dbReference>
<dbReference type="GO" id="GO:0043335">
    <property type="term" value="P:protein unfolding"/>
    <property type="evidence" value="ECO:0007669"/>
    <property type="project" value="UniProtKB-UniRule"/>
</dbReference>
<dbReference type="GO" id="GO:0051603">
    <property type="term" value="P:proteolysis involved in protein catabolic process"/>
    <property type="evidence" value="ECO:0007669"/>
    <property type="project" value="TreeGrafter"/>
</dbReference>
<dbReference type="CDD" id="cd19498">
    <property type="entry name" value="RecA-like_HslU"/>
    <property type="match status" value="1"/>
</dbReference>
<dbReference type="FunFam" id="3.40.50.300:FF:000213">
    <property type="entry name" value="ATP-dependent protease ATPase subunit HslU"/>
    <property type="match status" value="1"/>
</dbReference>
<dbReference type="Gene3D" id="1.10.8.60">
    <property type="match status" value="1"/>
</dbReference>
<dbReference type="Gene3D" id="3.40.50.300">
    <property type="entry name" value="P-loop containing nucleotide triphosphate hydrolases"/>
    <property type="match status" value="2"/>
</dbReference>
<dbReference type="HAMAP" id="MF_00249">
    <property type="entry name" value="HslU"/>
    <property type="match status" value="1"/>
</dbReference>
<dbReference type="InterPro" id="IPR003593">
    <property type="entry name" value="AAA+_ATPase"/>
</dbReference>
<dbReference type="InterPro" id="IPR050052">
    <property type="entry name" value="ATP-dep_Clp_protease_ClpX"/>
</dbReference>
<dbReference type="InterPro" id="IPR003959">
    <property type="entry name" value="ATPase_AAA_core"/>
</dbReference>
<dbReference type="InterPro" id="IPR011704">
    <property type="entry name" value="ATPase_dyneun-rel_AAA"/>
</dbReference>
<dbReference type="InterPro" id="IPR019489">
    <property type="entry name" value="Clp_ATPase_C"/>
</dbReference>
<dbReference type="InterPro" id="IPR004491">
    <property type="entry name" value="HslU"/>
</dbReference>
<dbReference type="InterPro" id="IPR027417">
    <property type="entry name" value="P-loop_NTPase"/>
</dbReference>
<dbReference type="NCBIfam" id="TIGR00390">
    <property type="entry name" value="hslU"/>
    <property type="match status" value="1"/>
</dbReference>
<dbReference type="NCBIfam" id="NF003544">
    <property type="entry name" value="PRK05201.1"/>
    <property type="match status" value="1"/>
</dbReference>
<dbReference type="PANTHER" id="PTHR48102">
    <property type="entry name" value="ATP-DEPENDENT CLP PROTEASE ATP-BINDING SUBUNIT CLPX-LIKE, MITOCHONDRIAL-RELATED"/>
    <property type="match status" value="1"/>
</dbReference>
<dbReference type="PANTHER" id="PTHR48102:SF3">
    <property type="entry name" value="ATP-DEPENDENT PROTEASE ATPASE SUBUNIT HSLU"/>
    <property type="match status" value="1"/>
</dbReference>
<dbReference type="Pfam" id="PF07724">
    <property type="entry name" value="AAA_2"/>
    <property type="match status" value="1"/>
</dbReference>
<dbReference type="Pfam" id="PF07728">
    <property type="entry name" value="AAA_5"/>
    <property type="match status" value="1"/>
</dbReference>
<dbReference type="SMART" id="SM00382">
    <property type="entry name" value="AAA"/>
    <property type="match status" value="1"/>
</dbReference>
<dbReference type="SMART" id="SM01086">
    <property type="entry name" value="ClpB_D2-small"/>
    <property type="match status" value="1"/>
</dbReference>
<dbReference type="SUPFAM" id="SSF52540">
    <property type="entry name" value="P-loop containing nucleoside triphosphate hydrolases"/>
    <property type="match status" value="1"/>
</dbReference>
<gene>
    <name evidence="1" type="primary">hslU</name>
    <name type="ordered locus">LIC_11601</name>
</gene>
<accession>Q72RY7</accession>
<name>HSLU_LEPIC</name>
<comment type="function">
    <text evidence="1">ATPase subunit of a proteasome-like degradation complex; this subunit has chaperone activity. The binding of ATP and its subsequent hydrolysis by HslU are essential for unfolding of protein substrates subsequently hydrolyzed by HslV. HslU recognizes the N-terminal part of its protein substrates and unfolds these before they are guided to HslV for hydrolysis.</text>
</comment>
<comment type="subunit">
    <text evidence="1">A double ring-shaped homohexamer of HslV is capped on each side by a ring-shaped HslU homohexamer. The assembly of the HslU/HslV complex is dependent on binding of ATP.</text>
</comment>
<comment type="subcellular location">
    <subcellularLocation>
        <location evidence="1">Cytoplasm</location>
    </subcellularLocation>
</comment>
<comment type="similarity">
    <text evidence="1">Belongs to the ClpX chaperone family. HslU subfamily.</text>
</comment>
<protein>
    <recommendedName>
        <fullName evidence="1">ATP-dependent protease ATPase subunit HslU</fullName>
    </recommendedName>
    <alternativeName>
        <fullName evidence="1">Unfoldase HslU</fullName>
    </alternativeName>
</protein>
<proteinExistence type="inferred from homology"/>
<evidence type="ECO:0000255" key="1">
    <source>
        <dbReference type="HAMAP-Rule" id="MF_00249"/>
    </source>
</evidence>
<organism>
    <name type="scientific">Leptospira interrogans serogroup Icterohaemorrhagiae serovar copenhageni (strain Fiocruz L1-130)</name>
    <dbReference type="NCBI Taxonomy" id="267671"/>
    <lineage>
        <taxon>Bacteria</taxon>
        <taxon>Pseudomonadati</taxon>
        <taxon>Spirochaetota</taxon>
        <taxon>Spirochaetia</taxon>
        <taxon>Leptospirales</taxon>
        <taxon>Leptospiraceae</taxon>
        <taxon>Leptospira</taxon>
    </lineage>
</organism>
<sequence length="479" mass="54041">MANHPIDQELTSPAEEELTPREIVAKLDEHIISQKNAKKAVAIALRNRTRRKKLDPEMREEIYPKNIIMIGPTGVGKTEIARRLSKLCGAPFLKVEATKYTEVGYVGRDVESMIRDLAVISMNLVKQEFRTKVEETAKQKAEEALLDILLPFPGENKHGSGQITGFATSSTLADEEDRKTHFLETREFMRKKLKTGKLDDQEVELDLPNPSVSQVPMLQVFGAGNLDDLDNQLQNVLGDILPKKNKKRKLKIPEALKALEESEAEKLLDPDKVQREALRRVEEMGIIFLDEIDKIAGREGKSGADVSREGVQRDLLPIVEGATVNTKIGPVKTDHILFIAAGAFHMTKPSDLIPELQGRFPIRVELEKLSREDFEKILTAPRSSLTRQYEALLSTDGIQLEFSLDGIQEIARIAYDMNEKHENIGARRLNTILERLLEEVSFEGPDLPESQRKVRIDGKYVTDRLQGVIQNKDLSQYIL</sequence>
<keyword id="KW-0067">ATP-binding</keyword>
<keyword id="KW-0143">Chaperone</keyword>
<keyword id="KW-0963">Cytoplasm</keyword>
<keyword id="KW-0547">Nucleotide-binding</keyword>
<reference key="1">
    <citation type="journal article" date="2004" name="J. Bacteriol.">
        <title>Comparative genomics of two Leptospira interrogans serovars reveals novel insights into physiology and pathogenesis.</title>
        <authorList>
            <person name="Nascimento A.L.T.O."/>
            <person name="Ko A.I."/>
            <person name="Martins E.A.L."/>
            <person name="Monteiro-Vitorello C.B."/>
            <person name="Ho P.L."/>
            <person name="Haake D.A."/>
            <person name="Verjovski-Almeida S."/>
            <person name="Hartskeerl R.A."/>
            <person name="Marques M.V."/>
            <person name="Oliveira M.C."/>
            <person name="Menck C.F.M."/>
            <person name="Leite L.C.C."/>
            <person name="Carrer H."/>
            <person name="Coutinho L.L."/>
            <person name="Degrave W.M."/>
            <person name="Dellagostin O.A."/>
            <person name="El-Dorry H."/>
            <person name="Ferro E.S."/>
            <person name="Ferro M.I.T."/>
            <person name="Furlan L.R."/>
            <person name="Gamberini M."/>
            <person name="Giglioti E.A."/>
            <person name="Goes-Neto A."/>
            <person name="Goldman G.H."/>
            <person name="Goldman M.H.S."/>
            <person name="Harakava R."/>
            <person name="Jeronimo S.M.B."/>
            <person name="Junqueira-de-Azevedo I.L.M."/>
            <person name="Kimura E.T."/>
            <person name="Kuramae E.E."/>
            <person name="Lemos E.G.M."/>
            <person name="Lemos M.V.F."/>
            <person name="Marino C.L."/>
            <person name="Nunes L.R."/>
            <person name="de Oliveira R.C."/>
            <person name="Pereira G.G."/>
            <person name="Reis M.S."/>
            <person name="Schriefer A."/>
            <person name="Siqueira W.J."/>
            <person name="Sommer P."/>
            <person name="Tsai S.M."/>
            <person name="Simpson A.J.G."/>
            <person name="Ferro J.A."/>
            <person name="Camargo L.E.A."/>
            <person name="Kitajima J.P."/>
            <person name="Setubal J.C."/>
            <person name="Van Sluys M.A."/>
        </authorList>
    </citation>
    <scope>NUCLEOTIDE SEQUENCE [LARGE SCALE GENOMIC DNA]</scope>
    <source>
        <strain>Fiocruz L1-130</strain>
    </source>
</reference>
<feature type="chain" id="PRO_0000160518" description="ATP-dependent protease ATPase subunit HslU">
    <location>
        <begin position="1"/>
        <end position="479"/>
    </location>
</feature>
<feature type="binding site" evidence="1">
    <location>
        <position position="32"/>
    </location>
    <ligand>
        <name>ATP</name>
        <dbReference type="ChEBI" id="CHEBI:30616"/>
    </ligand>
</feature>
<feature type="binding site" evidence="1">
    <location>
        <begin position="74"/>
        <end position="79"/>
    </location>
    <ligand>
        <name>ATP</name>
        <dbReference type="ChEBI" id="CHEBI:30616"/>
    </ligand>
</feature>
<feature type="binding site" evidence="1">
    <location>
        <position position="290"/>
    </location>
    <ligand>
        <name>ATP</name>
        <dbReference type="ChEBI" id="CHEBI:30616"/>
    </ligand>
</feature>
<feature type="binding site" evidence="1">
    <location>
        <position position="355"/>
    </location>
    <ligand>
        <name>ATP</name>
        <dbReference type="ChEBI" id="CHEBI:30616"/>
    </ligand>
</feature>
<feature type="binding site" evidence="1">
    <location>
        <position position="427"/>
    </location>
    <ligand>
        <name>ATP</name>
        <dbReference type="ChEBI" id="CHEBI:30616"/>
    </ligand>
</feature>